<name>THIM_STAAS</name>
<gene>
    <name evidence="1" type="primary">thiM</name>
    <name type="ordered locus">SAS1996</name>
</gene>
<evidence type="ECO:0000255" key="1">
    <source>
        <dbReference type="HAMAP-Rule" id="MF_00228"/>
    </source>
</evidence>
<accession>Q6G7L8</accession>
<organism>
    <name type="scientific">Staphylococcus aureus (strain MSSA476)</name>
    <dbReference type="NCBI Taxonomy" id="282459"/>
    <lineage>
        <taxon>Bacteria</taxon>
        <taxon>Bacillati</taxon>
        <taxon>Bacillota</taxon>
        <taxon>Bacilli</taxon>
        <taxon>Bacillales</taxon>
        <taxon>Staphylococcaceae</taxon>
        <taxon>Staphylococcus</taxon>
    </lineage>
</organism>
<reference key="1">
    <citation type="journal article" date="2004" name="Proc. Natl. Acad. Sci. U.S.A.">
        <title>Complete genomes of two clinical Staphylococcus aureus strains: evidence for the rapid evolution of virulence and drug resistance.</title>
        <authorList>
            <person name="Holden M.T.G."/>
            <person name="Feil E.J."/>
            <person name="Lindsay J.A."/>
            <person name="Peacock S.J."/>
            <person name="Day N.P.J."/>
            <person name="Enright M.C."/>
            <person name="Foster T.J."/>
            <person name="Moore C.E."/>
            <person name="Hurst L."/>
            <person name="Atkin R."/>
            <person name="Barron A."/>
            <person name="Bason N."/>
            <person name="Bentley S.D."/>
            <person name="Chillingworth C."/>
            <person name="Chillingworth T."/>
            <person name="Churcher C."/>
            <person name="Clark L."/>
            <person name="Corton C."/>
            <person name="Cronin A."/>
            <person name="Doggett J."/>
            <person name="Dowd L."/>
            <person name="Feltwell T."/>
            <person name="Hance Z."/>
            <person name="Harris B."/>
            <person name="Hauser H."/>
            <person name="Holroyd S."/>
            <person name="Jagels K."/>
            <person name="James K.D."/>
            <person name="Lennard N."/>
            <person name="Line A."/>
            <person name="Mayes R."/>
            <person name="Moule S."/>
            <person name="Mungall K."/>
            <person name="Ormond D."/>
            <person name="Quail M.A."/>
            <person name="Rabbinowitsch E."/>
            <person name="Rutherford K.M."/>
            <person name="Sanders M."/>
            <person name="Sharp S."/>
            <person name="Simmonds M."/>
            <person name="Stevens K."/>
            <person name="Whitehead S."/>
            <person name="Barrell B.G."/>
            <person name="Spratt B.G."/>
            <person name="Parkhill J."/>
        </authorList>
    </citation>
    <scope>NUCLEOTIDE SEQUENCE [LARGE SCALE GENOMIC DNA]</scope>
    <source>
        <strain>MSSA476</strain>
    </source>
</reference>
<proteinExistence type="inferred from homology"/>
<comment type="function">
    <text evidence="1">Catalyzes the phosphorylation of the hydroxyl group of 4-methyl-5-beta-hydroxyethylthiazole (THZ).</text>
</comment>
<comment type="catalytic activity">
    <reaction evidence="1">
        <text>5-(2-hydroxyethyl)-4-methylthiazole + ATP = 4-methyl-5-(2-phosphooxyethyl)-thiazole + ADP + H(+)</text>
        <dbReference type="Rhea" id="RHEA:24212"/>
        <dbReference type="ChEBI" id="CHEBI:15378"/>
        <dbReference type="ChEBI" id="CHEBI:17957"/>
        <dbReference type="ChEBI" id="CHEBI:30616"/>
        <dbReference type="ChEBI" id="CHEBI:58296"/>
        <dbReference type="ChEBI" id="CHEBI:456216"/>
        <dbReference type="EC" id="2.7.1.50"/>
    </reaction>
</comment>
<comment type="cofactor">
    <cofactor evidence="1">
        <name>Mg(2+)</name>
        <dbReference type="ChEBI" id="CHEBI:18420"/>
    </cofactor>
</comment>
<comment type="pathway">
    <text evidence="1">Cofactor biosynthesis; thiamine diphosphate biosynthesis; 4-methyl-5-(2-phosphoethyl)-thiazole from 5-(2-hydroxyethyl)-4-methylthiazole: step 1/1.</text>
</comment>
<comment type="similarity">
    <text evidence="1">Belongs to the Thz kinase family.</text>
</comment>
<feature type="chain" id="PRO_0000156956" description="Hydroxyethylthiazole kinase">
    <location>
        <begin position="1"/>
        <end position="266"/>
    </location>
</feature>
<feature type="binding site" evidence="1">
    <location>
        <position position="39"/>
    </location>
    <ligand>
        <name>substrate</name>
    </ligand>
</feature>
<feature type="binding site" evidence="1">
    <location>
        <position position="115"/>
    </location>
    <ligand>
        <name>ATP</name>
        <dbReference type="ChEBI" id="CHEBI:30616"/>
    </ligand>
</feature>
<feature type="binding site" evidence="1">
    <location>
        <position position="160"/>
    </location>
    <ligand>
        <name>ATP</name>
        <dbReference type="ChEBI" id="CHEBI:30616"/>
    </ligand>
</feature>
<feature type="binding site" evidence="1">
    <location>
        <position position="187"/>
    </location>
    <ligand>
        <name>substrate</name>
    </ligand>
</feature>
<sequence length="266" mass="28463">MNYLNKIRIENPLTICYTNDVVKNFTANGLLSIGASPAMSEAPEEAEEFYKVAQGLLINIGTLTAENEQDIIAIAQTANEAGLPIVFDPVAVGASTYRKQFCKLLLKSAKVSVIKGNASEILALIDDTATMKGTDSDANLDAVTIAKKAYATYKTAIVITGKEDVIVQDNKAIVLANGSPLLARVTGAGCLLGGVIAGFLFRETEPDIEALIEAVSVFNIAAEVAAENENCGGPGTFSPLLLDTLYHLNETTYQQRIRIQEVEKYV</sequence>
<keyword id="KW-0067">ATP-binding</keyword>
<keyword id="KW-0418">Kinase</keyword>
<keyword id="KW-0460">Magnesium</keyword>
<keyword id="KW-0479">Metal-binding</keyword>
<keyword id="KW-0547">Nucleotide-binding</keyword>
<keyword id="KW-0784">Thiamine biosynthesis</keyword>
<keyword id="KW-0808">Transferase</keyword>
<dbReference type="EC" id="2.7.1.50" evidence="1"/>
<dbReference type="EMBL" id="BX571857">
    <property type="protein sequence ID" value="CAG43803.1"/>
    <property type="molecule type" value="Genomic_DNA"/>
</dbReference>
<dbReference type="RefSeq" id="WP_001108492.1">
    <property type="nucleotide sequence ID" value="NC_002953.3"/>
</dbReference>
<dbReference type="SMR" id="Q6G7L8"/>
<dbReference type="KEGG" id="sas:SAS1996"/>
<dbReference type="HOGENOM" id="CLU_019943_0_2_9"/>
<dbReference type="UniPathway" id="UPA00060">
    <property type="reaction ID" value="UER00139"/>
</dbReference>
<dbReference type="GO" id="GO:0005524">
    <property type="term" value="F:ATP binding"/>
    <property type="evidence" value="ECO:0007669"/>
    <property type="project" value="UniProtKB-UniRule"/>
</dbReference>
<dbReference type="GO" id="GO:0004417">
    <property type="term" value="F:hydroxyethylthiazole kinase activity"/>
    <property type="evidence" value="ECO:0007669"/>
    <property type="project" value="UniProtKB-UniRule"/>
</dbReference>
<dbReference type="GO" id="GO:0000287">
    <property type="term" value="F:magnesium ion binding"/>
    <property type="evidence" value="ECO:0007669"/>
    <property type="project" value="UniProtKB-UniRule"/>
</dbReference>
<dbReference type="GO" id="GO:0009228">
    <property type="term" value="P:thiamine biosynthetic process"/>
    <property type="evidence" value="ECO:0007669"/>
    <property type="project" value="UniProtKB-KW"/>
</dbReference>
<dbReference type="GO" id="GO:0009229">
    <property type="term" value="P:thiamine diphosphate biosynthetic process"/>
    <property type="evidence" value="ECO:0007669"/>
    <property type="project" value="UniProtKB-UniRule"/>
</dbReference>
<dbReference type="CDD" id="cd01170">
    <property type="entry name" value="THZ_kinase"/>
    <property type="match status" value="1"/>
</dbReference>
<dbReference type="Gene3D" id="3.40.1190.20">
    <property type="match status" value="1"/>
</dbReference>
<dbReference type="HAMAP" id="MF_00228">
    <property type="entry name" value="Thz_kinase"/>
    <property type="match status" value="1"/>
</dbReference>
<dbReference type="InterPro" id="IPR000417">
    <property type="entry name" value="Hyethyz_kinase"/>
</dbReference>
<dbReference type="InterPro" id="IPR029056">
    <property type="entry name" value="Ribokinase-like"/>
</dbReference>
<dbReference type="NCBIfam" id="NF006830">
    <property type="entry name" value="PRK09355.1"/>
    <property type="match status" value="1"/>
</dbReference>
<dbReference type="Pfam" id="PF02110">
    <property type="entry name" value="HK"/>
    <property type="match status" value="1"/>
</dbReference>
<dbReference type="PIRSF" id="PIRSF000513">
    <property type="entry name" value="Thz_kinase"/>
    <property type="match status" value="1"/>
</dbReference>
<dbReference type="PRINTS" id="PR01099">
    <property type="entry name" value="HYETHTZKNASE"/>
</dbReference>
<dbReference type="SUPFAM" id="SSF53613">
    <property type="entry name" value="Ribokinase-like"/>
    <property type="match status" value="1"/>
</dbReference>
<protein>
    <recommendedName>
        <fullName evidence="1">Hydroxyethylthiazole kinase</fullName>
        <ecNumber evidence="1">2.7.1.50</ecNumber>
    </recommendedName>
    <alternativeName>
        <fullName evidence="1">4-methyl-5-beta-hydroxyethylthiazole kinase</fullName>
        <shortName evidence="1">TH kinase</shortName>
        <shortName evidence="1">Thz kinase</shortName>
    </alternativeName>
</protein>